<gene>
    <name type="primary">PERK10</name>
    <name type="ordered locus">At1g26150</name>
    <name type="ORF">F28B23.17</name>
</gene>
<proteinExistence type="evidence at protein level"/>
<name>PEK10_ARATH</name>
<accession>Q9C660</accession>
<organism>
    <name type="scientific">Arabidopsis thaliana</name>
    <name type="common">Mouse-ear cress</name>
    <dbReference type="NCBI Taxonomy" id="3702"/>
    <lineage>
        <taxon>Eukaryota</taxon>
        <taxon>Viridiplantae</taxon>
        <taxon>Streptophyta</taxon>
        <taxon>Embryophyta</taxon>
        <taxon>Tracheophyta</taxon>
        <taxon>Spermatophyta</taxon>
        <taxon>Magnoliopsida</taxon>
        <taxon>eudicotyledons</taxon>
        <taxon>Gunneridae</taxon>
        <taxon>Pentapetalae</taxon>
        <taxon>rosids</taxon>
        <taxon>malvids</taxon>
        <taxon>Brassicales</taxon>
        <taxon>Brassicaceae</taxon>
        <taxon>Camelineae</taxon>
        <taxon>Arabidopsis</taxon>
    </lineage>
</organism>
<keyword id="KW-0067">ATP-binding</keyword>
<keyword id="KW-1003">Cell membrane</keyword>
<keyword id="KW-0325">Glycoprotein</keyword>
<keyword id="KW-0418">Kinase</keyword>
<keyword id="KW-0472">Membrane</keyword>
<keyword id="KW-0547">Nucleotide-binding</keyword>
<keyword id="KW-1185">Reference proteome</keyword>
<keyword id="KW-0723">Serine/threonine-protein kinase</keyword>
<keyword id="KW-0808">Transferase</keyword>
<keyword id="KW-0812">Transmembrane</keyword>
<keyword id="KW-1133">Transmembrane helix</keyword>
<dbReference type="EC" id="2.7.11.1"/>
<dbReference type="EMBL" id="AC079829">
    <property type="protein sequence ID" value="AAG50687.1"/>
    <property type="status" value="ALT_SEQ"/>
    <property type="molecule type" value="Genomic_DNA"/>
</dbReference>
<dbReference type="EMBL" id="CP002684">
    <property type="protein sequence ID" value="AEE30655.1"/>
    <property type="molecule type" value="Genomic_DNA"/>
</dbReference>
<dbReference type="PIR" id="F86387">
    <property type="entry name" value="F86387"/>
</dbReference>
<dbReference type="RefSeq" id="NP_173940.2">
    <property type="nucleotide sequence ID" value="NM_102380.4"/>
</dbReference>
<dbReference type="SMR" id="Q9C660"/>
<dbReference type="BioGRID" id="24393">
    <property type="interactions" value="1"/>
</dbReference>
<dbReference type="FunCoup" id="Q9C660">
    <property type="interactions" value="38"/>
</dbReference>
<dbReference type="IntAct" id="Q9C660">
    <property type="interactions" value="2"/>
</dbReference>
<dbReference type="STRING" id="3702.Q9C660"/>
<dbReference type="GlyCosmos" id="Q9C660">
    <property type="glycosylation" value="3 sites, No reported glycans"/>
</dbReference>
<dbReference type="GlyGen" id="Q9C660">
    <property type="glycosylation" value="6 sites"/>
</dbReference>
<dbReference type="iPTMnet" id="Q9C660"/>
<dbReference type="PaxDb" id="3702-AT1G26150.1"/>
<dbReference type="ProteomicsDB" id="236149"/>
<dbReference type="EnsemblPlants" id="AT1G26150.1">
    <property type="protein sequence ID" value="AT1G26150.1"/>
    <property type="gene ID" value="AT1G26150"/>
</dbReference>
<dbReference type="GeneID" id="839156"/>
<dbReference type="Gramene" id="AT1G26150.1">
    <property type="protein sequence ID" value="AT1G26150.1"/>
    <property type="gene ID" value="AT1G26150"/>
</dbReference>
<dbReference type="KEGG" id="ath:AT1G26150"/>
<dbReference type="Araport" id="AT1G26150"/>
<dbReference type="TAIR" id="AT1G26150">
    <property type="gene designation" value="PERK10"/>
</dbReference>
<dbReference type="eggNOG" id="KOG1187">
    <property type="taxonomic scope" value="Eukaryota"/>
</dbReference>
<dbReference type="HOGENOM" id="CLU_000288_106_3_1"/>
<dbReference type="InParanoid" id="Q9C660"/>
<dbReference type="PhylomeDB" id="Q9C660"/>
<dbReference type="PRO" id="PR:Q9C660"/>
<dbReference type="Proteomes" id="UP000006548">
    <property type="component" value="Chromosome 1"/>
</dbReference>
<dbReference type="ExpressionAtlas" id="Q9C660">
    <property type="expression patterns" value="baseline and differential"/>
</dbReference>
<dbReference type="GO" id="GO:0005886">
    <property type="term" value="C:plasma membrane"/>
    <property type="evidence" value="ECO:0007669"/>
    <property type="project" value="UniProtKB-SubCell"/>
</dbReference>
<dbReference type="GO" id="GO:0005524">
    <property type="term" value="F:ATP binding"/>
    <property type="evidence" value="ECO:0007669"/>
    <property type="project" value="UniProtKB-KW"/>
</dbReference>
<dbReference type="GO" id="GO:0019901">
    <property type="term" value="F:protein kinase binding"/>
    <property type="evidence" value="ECO:0000353"/>
    <property type="project" value="UniProtKB"/>
</dbReference>
<dbReference type="GO" id="GO:0106310">
    <property type="term" value="F:protein serine kinase activity"/>
    <property type="evidence" value="ECO:0007669"/>
    <property type="project" value="RHEA"/>
</dbReference>
<dbReference type="GO" id="GO:0004674">
    <property type="term" value="F:protein serine/threonine kinase activity"/>
    <property type="evidence" value="ECO:0007669"/>
    <property type="project" value="UniProtKB-KW"/>
</dbReference>
<dbReference type="CDD" id="cd14066">
    <property type="entry name" value="STKc_IRAK"/>
    <property type="match status" value="1"/>
</dbReference>
<dbReference type="FunFam" id="3.30.200.20:FF:000212">
    <property type="entry name" value="Proline-rich receptor-like protein kinase PERK8"/>
    <property type="match status" value="1"/>
</dbReference>
<dbReference type="FunFam" id="1.10.510.10:FF:000173">
    <property type="entry name" value="proline-rich receptor-like protein kinase PERK8"/>
    <property type="match status" value="1"/>
</dbReference>
<dbReference type="Gene3D" id="3.30.200.20">
    <property type="entry name" value="Phosphorylase Kinase, domain 1"/>
    <property type="match status" value="1"/>
</dbReference>
<dbReference type="Gene3D" id="1.10.510.10">
    <property type="entry name" value="Transferase(Phosphotransferase) domain 1"/>
    <property type="match status" value="1"/>
</dbReference>
<dbReference type="InterPro" id="IPR011009">
    <property type="entry name" value="Kinase-like_dom_sf"/>
</dbReference>
<dbReference type="InterPro" id="IPR047117">
    <property type="entry name" value="PERK1-13-like"/>
</dbReference>
<dbReference type="InterPro" id="IPR000719">
    <property type="entry name" value="Prot_kinase_dom"/>
</dbReference>
<dbReference type="InterPro" id="IPR017441">
    <property type="entry name" value="Protein_kinase_ATP_BS"/>
</dbReference>
<dbReference type="InterPro" id="IPR001245">
    <property type="entry name" value="Ser-Thr/Tyr_kinase_cat_dom"/>
</dbReference>
<dbReference type="InterPro" id="IPR008271">
    <property type="entry name" value="Ser/Thr_kinase_AS"/>
</dbReference>
<dbReference type="PANTHER" id="PTHR47982:SF45">
    <property type="entry name" value="NON-SPECIFIC SERINE_THREONINE PROTEIN KINASE"/>
    <property type="match status" value="1"/>
</dbReference>
<dbReference type="PANTHER" id="PTHR47982">
    <property type="entry name" value="PROLINE-RICH RECEPTOR-LIKE PROTEIN KINASE PERK4"/>
    <property type="match status" value="1"/>
</dbReference>
<dbReference type="Pfam" id="PF07714">
    <property type="entry name" value="PK_Tyr_Ser-Thr"/>
    <property type="match status" value="1"/>
</dbReference>
<dbReference type="PRINTS" id="PR01217">
    <property type="entry name" value="PRICHEXTENSN"/>
</dbReference>
<dbReference type="SMART" id="SM00220">
    <property type="entry name" value="S_TKc"/>
    <property type="match status" value="1"/>
</dbReference>
<dbReference type="SUPFAM" id="SSF56112">
    <property type="entry name" value="Protein kinase-like (PK-like)"/>
    <property type="match status" value="1"/>
</dbReference>
<dbReference type="PROSITE" id="PS00107">
    <property type="entry name" value="PROTEIN_KINASE_ATP"/>
    <property type="match status" value="1"/>
</dbReference>
<dbReference type="PROSITE" id="PS50011">
    <property type="entry name" value="PROTEIN_KINASE_DOM"/>
    <property type="match status" value="1"/>
</dbReference>
<dbReference type="PROSITE" id="PS00108">
    <property type="entry name" value="PROTEIN_KINASE_ST"/>
    <property type="match status" value="1"/>
</dbReference>
<sequence length="762" mass="80856">MTTPAQAPREEVSLSPSLASPPLMALPPPQPSFPGDNATSPTREPTNGNPPETTNTPAQSSPPPETPLSSPPPEPSPPSPSLTGPPPTTIPVSPPPEPSPPPPLPTEAPPPANPVSSPPPESSPPPPPPTEAPPTTPITSPSPPTNPPPPPESPPSLPAPDPPSNPLPPPKLVPPSHSPPRHLPSPPASEIPPPPRHLPSPPASERPSTPPSDSEHPSPPPPGHPKRREQPPPPGSKRPTPSPPSPSDSKRPVHPSPPSPPEETLPPPKPSPDPLPSNSSSPPTLLPPSSVVSPPSPPRKSVSGPDNPSPNNPTPVTDNSSSSGISIAAVVGVSIGVALVLLTLIGVVVCCLKKRKKRLSTIGGGYVMPTPMESSSPRSDSALLKTQSSAPLVGNRSSNRTYLSQSEPGGFGQSRELFSYEELVIATNGFSDENLLGEGGFGRVYKGVLPDERVVAVKQLKIGGGQGDREFKAEVDTISRVHHRNLLSMVGYCISENRRLLIYDYVPNNNLYFHLHAAGTPGLDWATRVKIAAGAARGLAYLHEDCHPRIIHRDIKSSNILLENNFHALVSDFGLAKLALDCNTHITTRVMGTFGYMAPEYASSGKLTEKSDVFSFGVVLLELITGRKPVDASQPLGDESLVEWARPLLSNATETEEFTALADPKLGRNYVGVEMFRMIEAAAACIRHSATKRPRMSQIVRAFDSLAEEDLTNGMRLGESEIINSAQQSAEIRLFRRMAFGSQNYSTDSLTRNSYISKDENL</sequence>
<feature type="chain" id="PRO_0000400062" description="Proline-rich receptor-like protein kinase PERK10">
    <location>
        <begin position="1"/>
        <end position="762"/>
    </location>
</feature>
<feature type="topological domain" description="Extracellular" evidence="2">
    <location>
        <begin position="1"/>
        <end position="328"/>
    </location>
</feature>
<feature type="transmembrane region" description="Helical" evidence="2">
    <location>
        <begin position="329"/>
        <end position="349"/>
    </location>
</feature>
<feature type="topological domain" description="Cytoplasmic" evidence="2">
    <location>
        <begin position="350"/>
        <end position="762"/>
    </location>
</feature>
<feature type="domain" description="Protein kinase" evidence="3">
    <location>
        <begin position="430"/>
        <end position="706"/>
    </location>
</feature>
<feature type="region of interest" description="Disordered" evidence="5">
    <location>
        <begin position="1"/>
        <end position="322"/>
    </location>
</feature>
<feature type="region of interest" description="Disordered" evidence="5">
    <location>
        <begin position="370"/>
        <end position="410"/>
    </location>
</feature>
<feature type="compositionally biased region" description="Low complexity" evidence="5">
    <location>
        <begin position="13"/>
        <end position="23"/>
    </location>
</feature>
<feature type="compositionally biased region" description="Low complexity" evidence="5">
    <location>
        <begin position="41"/>
        <end position="57"/>
    </location>
</feature>
<feature type="compositionally biased region" description="Pro residues" evidence="5">
    <location>
        <begin position="60"/>
        <end position="210"/>
    </location>
</feature>
<feature type="compositionally biased region" description="Pro residues" evidence="5">
    <location>
        <begin position="231"/>
        <end position="246"/>
    </location>
</feature>
<feature type="compositionally biased region" description="Pro residues" evidence="5">
    <location>
        <begin position="254"/>
        <end position="275"/>
    </location>
</feature>
<feature type="compositionally biased region" description="Low complexity" evidence="5">
    <location>
        <begin position="276"/>
        <end position="305"/>
    </location>
</feature>
<feature type="compositionally biased region" description="Polar residues" evidence="5">
    <location>
        <begin position="372"/>
        <end position="407"/>
    </location>
</feature>
<feature type="active site" description="Proton acceptor" evidence="3 4">
    <location>
        <position position="554"/>
    </location>
</feature>
<feature type="binding site" evidence="3">
    <location>
        <begin position="436"/>
        <end position="444"/>
    </location>
    <ligand>
        <name>ATP</name>
        <dbReference type="ChEBI" id="CHEBI:30616"/>
    </ligand>
</feature>
<feature type="binding site" evidence="3">
    <location>
        <position position="458"/>
    </location>
    <ligand>
        <name>ATP</name>
        <dbReference type="ChEBI" id="CHEBI:30616"/>
    </ligand>
</feature>
<feature type="glycosylation site" description="N-linked (GlcNAc...) asparagine" evidence="2">
    <location>
        <position position="37"/>
    </location>
</feature>
<feature type="glycosylation site" description="N-linked (GlcNAc...) asparagine" evidence="2">
    <location>
        <position position="278"/>
    </location>
</feature>
<feature type="glycosylation site" description="N-linked (GlcNAc...) asparagine" evidence="2">
    <location>
        <position position="319"/>
    </location>
</feature>
<protein>
    <recommendedName>
        <fullName>Proline-rich receptor-like protein kinase PERK10</fullName>
        <ecNumber>2.7.11.1</ecNumber>
    </recommendedName>
    <alternativeName>
        <fullName>Proline-rich extensin-like receptor kinase 10</fullName>
        <shortName>AtPERK10</shortName>
    </alternativeName>
</protein>
<comment type="function">
    <text evidence="7">Could be involved in the negative regulation of root growth.</text>
</comment>
<comment type="catalytic activity">
    <reaction>
        <text>L-seryl-[protein] + ATP = O-phospho-L-seryl-[protein] + ADP + H(+)</text>
        <dbReference type="Rhea" id="RHEA:17989"/>
        <dbReference type="Rhea" id="RHEA-COMP:9863"/>
        <dbReference type="Rhea" id="RHEA-COMP:11604"/>
        <dbReference type="ChEBI" id="CHEBI:15378"/>
        <dbReference type="ChEBI" id="CHEBI:29999"/>
        <dbReference type="ChEBI" id="CHEBI:30616"/>
        <dbReference type="ChEBI" id="CHEBI:83421"/>
        <dbReference type="ChEBI" id="CHEBI:456216"/>
        <dbReference type="EC" id="2.7.11.1"/>
    </reaction>
</comment>
<comment type="catalytic activity">
    <reaction>
        <text>L-threonyl-[protein] + ATP = O-phospho-L-threonyl-[protein] + ADP + H(+)</text>
        <dbReference type="Rhea" id="RHEA:46608"/>
        <dbReference type="Rhea" id="RHEA-COMP:11060"/>
        <dbReference type="Rhea" id="RHEA-COMP:11605"/>
        <dbReference type="ChEBI" id="CHEBI:15378"/>
        <dbReference type="ChEBI" id="CHEBI:30013"/>
        <dbReference type="ChEBI" id="CHEBI:30616"/>
        <dbReference type="ChEBI" id="CHEBI:61977"/>
        <dbReference type="ChEBI" id="CHEBI:456216"/>
        <dbReference type="EC" id="2.7.11.1"/>
    </reaction>
</comment>
<comment type="subunit">
    <text evidence="7">Interacts with KIPK1 and KIPK2 (via its cytosolic domain).</text>
</comment>
<comment type="subcellular location">
    <subcellularLocation>
        <location evidence="1">Cell membrane</location>
        <topology evidence="1">Single-pass membrane protein</topology>
    </subcellularLocation>
</comment>
<comment type="tissue specificity">
    <text evidence="6">Mostly expressed in inflorescence bolts and flower buds, and, to a lower extent, in roots, seedlings, leaves and siliques.</text>
</comment>
<comment type="similarity">
    <text evidence="3">Belongs to the protein kinase superfamily. Ser/Thr protein kinase family.</text>
</comment>
<comment type="sequence caution" evidence="8">
    <conflict type="erroneous gene model prediction">
        <sequence resource="EMBL-CDS" id="AAG50687"/>
    </conflict>
</comment>
<evidence type="ECO:0000250" key="1"/>
<evidence type="ECO:0000255" key="2"/>
<evidence type="ECO:0000255" key="3">
    <source>
        <dbReference type="PROSITE-ProRule" id="PRU00159"/>
    </source>
</evidence>
<evidence type="ECO:0000255" key="4">
    <source>
        <dbReference type="PROSITE-ProRule" id="PRU10027"/>
    </source>
</evidence>
<evidence type="ECO:0000256" key="5">
    <source>
        <dbReference type="SAM" id="MobiDB-lite"/>
    </source>
</evidence>
<evidence type="ECO:0000269" key="6">
    <source>
    </source>
</evidence>
<evidence type="ECO:0000269" key="7">
    <source>
    </source>
</evidence>
<evidence type="ECO:0000305" key="8"/>
<reference key="1">
    <citation type="journal article" date="2000" name="Nature">
        <title>Sequence and analysis of chromosome 1 of the plant Arabidopsis thaliana.</title>
        <authorList>
            <person name="Theologis A."/>
            <person name="Ecker J.R."/>
            <person name="Palm C.J."/>
            <person name="Federspiel N.A."/>
            <person name="Kaul S."/>
            <person name="White O."/>
            <person name="Alonso J."/>
            <person name="Altafi H."/>
            <person name="Araujo R."/>
            <person name="Bowman C.L."/>
            <person name="Brooks S.Y."/>
            <person name="Buehler E."/>
            <person name="Chan A."/>
            <person name="Chao Q."/>
            <person name="Chen H."/>
            <person name="Cheuk R.F."/>
            <person name="Chin C.W."/>
            <person name="Chung M.K."/>
            <person name="Conn L."/>
            <person name="Conway A.B."/>
            <person name="Conway A.R."/>
            <person name="Creasy T.H."/>
            <person name="Dewar K."/>
            <person name="Dunn P."/>
            <person name="Etgu P."/>
            <person name="Feldblyum T.V."/>
            <person name="Feng J.-D."/>
            <person name="Fong B."/>
            <person name="Fujii C.Y."/>
            <person name="Gill J.E."/>
            <person name="Goldsmith A.D."/>
            <person name="Haas B."/>
            <person name="Hansen N.F."/>
            <person name="Hughes B."/>
            <person name="Huizar L."/>
            <person name="Hunter J.L."/>
            <person name="Jenkins J."/>
            <person name="Johnson-Hopson C."/>
            <person name="Khan S."/>
            <person name="Khaykin E."/>
            <person name="Kim C.J."/>
            <person name="Koo H.L."/>
            <person name="Kremenetskaia I."/>
            <person name="Kurtz D.B."/>
            <person name="Kwan A."/>
            <person name="Lam B."/>
            <person name="Langin-Hooper S."/>
            <person name="Lee A."/>
            <person name="Lee J.M."/>
            <person name="Lenz C.A."/>
            <person name="Li J.H."/>
            <person name="Li Y.-P."/>
            <person name="Lin X."/>
            <person name="Liu S.X."/>
            <person name="Liu Z.A."/>
            <person name="Luros J.S."/>
            <person name="Maiti R."/>
            <person name="Marziali A."/>
            <person name="Militscher J."/>
            <person name="Miranda M."/>
            <person name="Nguyen M."/>
            <person name="Nierman W.C."/>
            <person name="Osborne B.I."/>
            <person name="Pai G."/>
            <person name="Peterson J."/>
            <person name="Pham P.K."/>
            <person name="Rizzo M."/>
            <person name="Rooney T."/>
            <person name="Rowley D."/>
            <person name="Sakano H."/>
            <person name="Salzberg S.L."/>
            <person name="Schwartz J.R."/>
            <person name="Shinn P."/>
            <person name="Southwick A.M."/>
            <person name="Sun H."/>
            <person name="Tallon L.J."/>
            <person name="Tambunga G."/>
            <person name="Toriumi M.J."/>
            <person name="Town C.D."/>
            <person name="Utterback T."/>
            <person name="Van Aken S."/>
            <person name="Vaysberg M."/>
            <person name="Vysotskaia V.S."/>
            <person name="Walker M."/>
            <person name="Wu D."/>
            <person name="Yu G."/>
            <person name="Fraser C.M."/>
            <person name="Venter J.C."/>
            <person name="Davis R.W."/>
        </authorList>
    </citation>
    <scope>NUCLEOTIDE SEQUENCE [LARGE SCALE GENOMIC DNA]</scope>
    <source>
        <strain>cv. Columbia</strain>
    </source>
</reference>
<reference key="2">
    <citation type="journal article" date="2017" name="Plant J.">
        <title>Araport11: a complete reannotation of the Arabidopsis thaliana reference genome.</title>
        <authorList>
            <person name="Cheng C.Y."/>
            <person name="Krishnakumar V."/>
            <person name="Chan A.P."/>
            <person name="Thibaud-Nissen F."/>
            <person name="Schobel S."/>
            <person name="Town C.D."/>
        </authorList>
    </citation>
    <scope>GENOME REANNOTATION</scope>
    <source>
        <strain>cv. Columbia</strain>
    </source>
</reference>
<reference key="3">
    <citation type="journal article" date="2002" name="Plant Mol. Biol.">
        <title>The proline-rich, extensin-like receptor kinase-1 (PERK1) gene is rapidly induced by wounding.</title>
        <authorList>
            <person name="Silva N.F."/>
            <person name="Goring D.R."/>
        </authorList>
    </citation>
    <scope>GENE FAMILY</scope>
</reference>
<reference key="4">
    <citation type="journal article" date="2004" name="Plant Cell Physiol.">
        <title>A comprehensive expression analysis of the Arabidopsis proline-rich extensin-like receptor kinase gene family using bioinformatic and experimental approaches.</title>
        <authorList>
            <person name="Nakhamchik A."/>
            <person name="Zhao Z."/>
            <person name="Provart N.J."/>
            <person name="Shiu S.-H."/>
            <person name="Keatley S.K."/>
            <person name="Cameron R.K."/>
            <person name="Goring D.R."/>
        </authorList>
    </citation>
    <scope>TISSUE SPECIFICITY</scope>
    <scope>GENE FAMILY</scope>
    <scope>NOMENCLATURE</scope>
</reference>
<reference key="5">
    <citation type="journal article" date="2015" name="J. Exp. Bot.">
        <title>PERK-KIPK-KCBP signalling negatively regulates root growth in Arabidopsis thaliana.</title>
        <authorList>
            <person name="Humphrey T.V."/>
            <person name="Haasen K.E."/>
            <person name="Aldea-Brydges M.G."/>
            <person name="Sun H."/>
            <person name="Zayed Y."/>
            <person name="Indriolo E."/>
            <person name="Goring D.R."/>
        </authorList>
    </citation>
    <scope>INTERACTION WITH KIPK1 AND KIPK2</scope>
    <scope>FUNCTION</scope>
</reference>